<sequence>MTEAPAEFPPEDETPPRGPGDEWVIGILRELREEALKHFDPRLLTTLGNYICARHGDTLESARELINVLQRALFVHFRAGCKISRIGQTRGETPFSAIPTPRGMQ</sequence>
<gene>
    <name type="primary">vpr</name>
</gene>
<dbReference type="EMBL" id="U22047">
    <property type="protein sequence ID" value="AAA64579.1"/>
    <property type="molecule type" value="Genomic_DNA"/>
</dbReference>
<dbReference type="SMR" id="Q74123"/>
<dbReference type="Proteomes" id="UP000007425">
    <property type="component" value="Segment"/>
</dbReference>
<dbReference type="GO" id="GO:0043657">
    <property type="term" value="C:host cell"/>
    <property type="evidence" value="ECO:0007669"/>
    <property type="project" value="GOC"/>
</dbReference>
<dbReference type="GO" id="GO:0042025">
    <property type="term" value="C:host cell nucleus"/>
    <property type="evidence" value="ECO:0007669"/>
    <property type="project" value="UniProtKB-SubCell"/>
</dbReference>
<dbReference type="GO" id="GO:0044423">
    <property type="term" value="C:virion component"/>
    <property type="evidence" value="ECO:0007669"/>
    <property type="project" value="UniProtKB-KW"/>
</dbReference>
<dbReference type="GO" id="GO:0046718">
    <property type="term" value="P:symbiont entry into host cell"/>
    <property type="evidence" value="ECO:0007669"/>
    <property type="project" value="UniProtKB-KW"/>
</dbReference>
<dbReference type="GO" id="GO:0039592">
    <property type="term" value="P:symbiont-mediated arrest of host cell cycle during G2/M transition"/>
    <property type="evidence" value="ECO:0007669"/>
    <property type="project" value="UniProtKB-KW"/>
</dbReference>
<dbReference type="GO" id="GO:0075732">
    <property type="term" value="P:viral penetration into host nucleus"/>
    <property type="evidence" value="ECO:0007669"/>
    <property type="project" value="UniProtKB-KW"/>
</dbReference>
<dbReference type="Gene3D" id="6.10.210.10">
    <property type="match status" value="1"/>
</dbReference>
<dbReference type="Gene3D" id="1.20.5.90">
    <property type="entry name" value="VpR/VpX protein, C-terminal domain"/>
    <property type="match status" value="1"/>
</dbReference>
<dbReference type="InterPro" id="IPR000012">
    <property type="entry name" value="RetroV_VpR/X"/>
</dbReference>
<dbReference type="Pfam" id="PF00522">
    <property type="entry name" value="VPR"/>
    <property type="match status" value="1"/>
</dbReference>
<dbReference type="PRINTS" id="PR00444">
    <property type="entry name" value="HIVVPRVPX"/>
</dbReference>
<organismHost>
    <name type="scientific">Homo sapiens</name>
    <name type="common">Human</name>
    <dbReference type="NCBI Taxonomy" id="9606"/>
</organismHost>
<protein>
    <recommendedName>
        <fullName>Protein Vpr</fullName>
    </recommendedName>
    <alternativeName>
        <fullName>R ORF protein</fullName>
    </alternativeName>
    <alternativeName>
        <fullName>Viral protein R</fullName>
    </alternativeName>
</protein>
<evidence type="ECO:0000250" key="1"/>
<evidence type="ECO:0000256" key="2">
    <source>
        <dbReference type="SAM" id="MobiDB-lite"/>
    </source>
</evidence>
<reference key="1">
    <citation type="submission" date="1995-04" db="EMBL/GenBank/DDBJ databases">
        <authorList>
            <person name="Kraus G.K."/>
            <person name="Talbott R."/>
            <person name="Leavitt M."/>
            <person name="Luznick L."/>
            <person name="Schmidt A."/>
            <person name="Badel P."/>
            <person name="Bartz C."/>
            <person name="Morton W."/>
            <person name="Wong-Staal F."/>
            <person name="Looney D.J."/>
        </authorList>
    </citation>
    <scope>NUCLEOTIDE SEQUENCE [GENOMIC DNA]</scope>
</reference>
<name>VPR_HV2KR</name>
<organism>
    <name type="scientific">Human immunodeficiency virus type 2 subtype A (isolate KR)</name>
    <name type="common">HIV-2</name>
    <dbReference type="NCBI Taxonomy" id="73484"/>
    <lineage>
        <taxon>Viruses</taxon>
        <taxon>Riboviria</taxon>
        <taxon>Pararnavirae</taxon>
        <taxon>Artverviricota</taxon>
        <taxon>Revtraviricetes</taxon>
        <taxon>Ortervirales</taxon>
        <taxon>Retroviridae</taxon>
        <taxon>Orthoretrovirinae</taxon>
        <taxon>Lentivirus</taxon>
        <taxon>Human immunodeficiency virus 2</taxon>
    </lineage>
</organism>
<feature type="chain" id="PRO_0000085460" description="Protein Vpr">
    <location>
        <begin position="1"/>
        <end position="105"/>
    </location>
</feature>
<feature type="region of interest" description="Disordered" evidence="2">
    <location>
        <begin position="1"/>
        <end position="21"/>
    </location>
</feature>
<feature type="modified residue" description="Phosphoserine; by host" evidence="1">
    <location>
        <position position="84"/>
    </location>
</feature>
<keyword id="KW-0010">Activator</keyword>
<keyword id="KW-0014">AIDS</keyword>
<keyword id="KW-0131">Cell cycle</keyword>
<keyword id="KW-1079">Host G2/M cell cycle arrest by virus</keyword>
<keyword id="KW-1048">Host nucleus</keyword>
<keyword id="KW-0945">Host-virus interaction</keyword>
<keyword id="KW-1121">Modulation of host cell cycle by virus</keyword>
<keyword id="KW-0597">Phosphoprotein</keyword>
<keyword id="KW-0804">Transcription</keyword>
<keyword id="KW-0805">Transcription regulation</keyword>
<keyword id="KW-1163">Viral penetration into host nucleus</keyword>
<keyword id="KW-0946">Virion</keyword>
<keyword id="KW-1160">Virus entry into host cell</keyword>
<accession>Q74123</accession>
<proteinExistence type="inferred from homology"/>
<comment type="function">
    <text evidence="1">Stimulates gene expression driven by the HIV-2 LTR. Prevents infected cells from undergoing mitosis and proliferating, by inducing arrest or delay in the G2 phase of the cell cycle. Cell cycle arrest creates a favorable environment for maximizing viral expression and production (By similarity).</text>
</comment>
<comment type="subunit">
    <text evidence="1">Interacts with human UNG.</text>
</comment>
<comment type="subcellular location">
    <subcellularLocation>
        <location>Virion</location>
    </subcellularLocation>
    <subcellularLocation>
        <location evidence="1">Host nucleus</location>
    </subcellularLocation>
</comment>